<name>GBP2_MOUSE</name>
<comment type="function">
    <text evidence="2 6 7 8 9 10 11 12">Interferon (IFN)-inducible GTPase that plays important roles in innate immunity against a diverse range of bacterial, viral and protozoan pathogens (PubMed:18025219, PubMed:24715728, PubMed:24739961, PubMed:25774715, PubMed:25774716, PubMed:27693356, PubMed:30062052). Hydrolyzes GTP to GMP in 2 consecutive cleavage reactions, but the major reaction product is GDP (By similarity). Following infection, recruited to the pathogen-containing vacuoles or vacuole-escaped bacteria and acts as a positive regulator of inflammasome assembly by promoting the release of inflammasome ligands from bacteria (PubMed:24715728, PubMed:24739961, PubMed:25774715, PubMed:25774716). Acts by promoting lysis of pathogen-containing vacuoles, releasing pathogens into the cytosol (PubMed:24715728, PubMed:24739961, PubMed:25774715, PubMed:25774716). Following pathogen release in the cytosol, promotes recruitment of proteins that mediate bacterial cytolysis, such as Gm12250/Irgb10: this liberates ligands that are detected by inflammasomes, such as lipopolysaccharide (LPS) that activates the non-canonical CASP4/CASP11 inflammasome or double-stranded DNA (dsDNA) that activates the AIM2 inflammasome (PubMed:24715728, PubMed:24739961, PubMed:25774715, PubMed:25774716, PubMed:27693356, PubMed:30062052). Confers protection to the protozoan pathogen Toxoplasma gondii (PubMed:18025219). Independently of its GTPase activity, acts as an inhibitor of various viruses infectivity by inhibiting FURIN-mediated maturation of viral envelope proteins (By similarity).</text>
</comment>
<comment type="catalytic activity">
    <reaction evidence="2">
        <text>GTP + H2O = GDP + phosphate + H(+)</text>
        <dbReference type="Rhea" id="RHEA:19669"/>
        <dbReference type="ChEBI" id="CHEBI:15377"/>
        <dbReference type="ChEBI" id="CHEBI:15378"/>
        <dbReference type="ChEBI" id="CHEBI:37565"/>
        <dbReference type="ChEBI" id="CHEBI:43474"/>
        <dbReference type="ChEBI" id="CHEBI:58189"/>
    </reaction>
</comment>
<comment type="subunit">
    <text evidence="2">Homodimer; homodimerization occurs upon GTP-binding and is required for the association with membranous structures (By similarity). Heterodimer with other family members, including GBP1, GBP3, GBP4 and GBP5 (By similarity).</text>
</comment>
<comment type="subcellular location">
    <subcellularLocation>
        <location evidence="6 13">Cytoplasmic vesicle membrane</location>
        <topology evidence="2">Lipid-anchor</topology>
    </subcellularLocation>
    <subcellularLocation>
        <location evidence="2">Golgi apparatus membrane</location>
        <topology evidence="2">Lipid-anchor</topology>
    </subcellularLocation>
    <subcellularLocation>
        <location evidence="2">Cytoplasm</location>
    </subcellularLocation>
    <subcellularLocation>
        <location evidence="2">Cytoplasm</location>
        <location evidence="2">Perinuclear region</location>
    </subcellularLocation>
    <text evidence="2">GBP2-GBP5 dimers localize to the Golgi apparatus.</text>
</comment>
<comment type="induction">
    <text evidence="6 9 15">By IFNG/IFN-gamma and IFNB1/IFN-beta (PubMed:18025219, PubMed:9862701). Up-regulated upon infection by T.gondii or L.monocytogenes (PubMed:18025219). By IRF1 in response to bacterial infection (PubMed:25774715).</text>
</comment>
<comment type="PTM">
    <text evidence="2">Isoprenylation is required for proper subcellular location.</text>
</comment>
<comment type="similarity">
    <text evidence="5">Belongs to the TRAFAC class dynamin-like GTPase superfamily. GB1/RHD3 GTPase family. GB1 subfamily.</text>
</comment>
<sequence length="589" mass="66739">MASEIHMSEPMCLIENTEAQLVINQEALRILSAITQPVVVVAIVGLYRTGKSYLMNKLAGKRTGFSLGSTVQSHTKGIWMWCVPHPKKAGQTLVLLDTEGLEDVEKGDNQNDCWIFALAVLLSSTFIYNSIGTINQQAMDQLHYVTELTDLIKSKSSPDQSGVDDSANFVGFFPTFVWTLRDFSLELEVNGKPVTSDEYLEHSLTLKKGADKKTKSFNEPRLCIRKFFPKRKCFIFDRPAQRKQLSKLETLREEELCGEFVEQVAEFTSYILSYSSVKTLCGGIIVNGPRLKSLVQTYVGAISNGSLPCMESAVLTLAQIENSAAVQKAITHYEEQMNQKIQMPTETLQELLDLHRPIESEAIEVFLKNSFKDVDQKFQTELGNLLVAKRDAFIKKNMDVSSARCSDLLEDIFGPLEEEVKLGTFSKPGGYYLFLQMRQELEKKYNQAPGKGLQAEAMLKNYFDSKADVVETLLQTDQSLTEAAKEVEEERTKAEAAEAANRELEKKQKEFELMMQQKEKSYQEHVKKLTEKMKDEQKQLLAEQENIIAAKLREQEKFLKEGFENESKKLIREIDTLKQNKSSGKCTIL</sequence>
<feature type="chain" id="PRO_0000190966" description="Guanylate-binding protein 2">
    <location>
        <begin position="1"/>
        <end position="586"/>
    </location>
</feature>
<feature type="propeptide" id="PRO_0000370783" description="Removed in mature form" evidence="4">
    <location>
        <begin position="587"/>
        <end position="589"/>
    </location>
</feature>
<feature type="domain" description="GB1/RHD3-type G" evidence="5">
    <location>
        <begin position="35"/>
        <end position="276"/>
    </location>
</feature>
<feature type="region of interest" description="GTPase domain (Globular)" evidence="1">
    <location>
        <begin position="1"/>
        <end position="309"/>
    </location>
</feature>
<feature type="binding site" evidence="3">
    <location>
        <begin position="45"/>
        <end position="52"/>
    </location>
    <ligand>
        <name>GTP</name>
        <dbReference type="ChEBI" id="CHEBI:37565"/>
    </ligand>
</feature>
<feature type="binding site" evidence="3">
    <location>
        <begin position="181"/>
        <end position="182"/>
    </location>
    <ligand>
        <name>GTP</name>
        <dbReference type="ChEBI" id="CHEBI:37565"/>
    </ligand>
</feature>
<feature type="binding site" evidence="3">
    <location>
        <position position="245"/>
    </location>
    <ligand>
        <name>GTP</name>
        <dbReference type="ChEBI" id="CHEBI:37565"/>
    </ligand>
</feature>
<feature type="modified residue" description="Cysteine methyl ester" evidence="18">
    <location>
        <position position="586"/>
    </location>
</feature>
<feature type="lipid moiety-binding region" description="S-geranylgeranyl cysteine" evidence="14">
    <location>
        <position position="586"/>
    </location>
</feature>
<feature type="sequence conflict" description="In Ref. 4; CAJ18457 and 5; AAH11336/AAH32882." evidence="17" ref="4 5">
    <original>V</original>
    <variation>I</variation>
    <location>
        <position position="163"/>
    </location>
</feature>
<feature type="sequence conflict" description="In Ref. 3; AAD39746." evidence="17" ref="3">
    <original>S</original>
    <variation>T</variation>
    <location>
        <position position="246"/>
    </location>
</feature>
<feature type="sequence conflict" description="In Ref. 5; AAH11336." evidence="17" ref="5">
    <original>E</original>
    <variation>D</variation>
    <location>
        <position position="381"/>
    </location>
</feature>
<organism>
    <name type="scientific">Mus musculus</name>
    <name type="common">Mouse</name>
    <dbReference type="NCBI Taxonomy" id="10090"/>
    <lineage>
        <taxon>Eukaryota</taxon>
        <taxon>Metazoa</taxon>
        <taxon>Chordata</taxon>
        <taxon>Craniata</taxon>
        <taxon>Vertebrata</taxon>
        <taxon>Euteleostomi</taxon>
        <taxon>Mammalia</taxon>
        <taxon>Eutheria</taxon>
        <taxon>Euarchontoglires</taxon>
        <taxon>Glires</taxon>
        <taxon>Rodentia</taxon>
        <taxon>Myomorpha</taxon>
        <taxon>Muroidea</taxon>
        <taxon>Muridae</taxon>
        <taxon>Murinae</taxon>
        <taxon>Mus</taxon>
        <taxon>Mus</taxon>
    </lineage>
</organism>
<gene>
    <name evidence="16 19" type="primary">Gbp2</name>
</gene>
<proteinExistence type="evidence at protein level"/>
<protein>
    <recommendedName>
        <fullName>Guanylate-binding protein 2</fullName>
        <ecNumber evidence="2">3.6.5.-</ecNumber>
    </recommendedName>
    <alternativeName>
        <fullName>GTP-binding protein 2</fullName>
        <shortName>GBP-2</shortName>
        <shortName>mGBP-2</shortName>
        <shortName>mGBP2</shortName>
    </alternativeName>
    <alternativeName>
        <fullName>Guanine nucleotide-binding protein 2</fullName>
    </alternativeName>
    <alternativeName>
        <fullName>Interferon-induced guanylate-binding protein 2</fullName>
    </alternativeName>
</protein>
<evidence type="ECO:0000250" key="1">
    <source>
        <dbReference type="UniProtKB" id="P32455"/>
    </source>
</evidence>
<evidence type="ECO:0000250" key="2">
    <source>
        <dbReference type="UniProtKB" id="P32456"/>
    </source>
</evidence>
<evidence type="ECO:0000250" key="3">
    <source>
        <dbReference type="UniProtKB" id="Q96PP8"/>
    </source>
</evidence>
<evidence type="ECO:0000255" key="4"/>
<evidence type="ECO:0000255" key="5">
    <source>
        <dbReference type="PROSITE-ProRule" id="PRU01052"/>
    </source>
</evidence>
<evidence type="ECO:0000269" key="6">
    <source>
    </source>
</evidence>
<evidence type="ECO:0000269" key="7">
    <source>
    </source>
</evidence>
<evidence type="ECO:0000269" key="8">
    <source>
    </source>
</evidence>
<evidence type="ECO:0000269" key="9">
    <source>
    </source>
</evidence>
<evidence type="ECO:0000269" key="10">
    <source>
    </source>
</evidence>
<evidence type="ECO:0000269" key="11">
    <source>
    </source>
</evidence>
<evidence type="ECO:0000269" key="12">
    <source>
    </source>
</evidence>
<evidence type="ECO:0000269" key="13">
    <source>
    </source>
</evidence>
<evidence type="ECO:0000269" key="14">
    <source>
    </source>
</evidence>
<evidence type="ECO:0000269" key="15">
    <source>
    </source>
</evidence>
<evidence type="ECO:0000303" key="16">
    <source>
    </source>
</evidence>
<evidence type="ECO:0000305" key="17"/>
<evidence type="ECO:0000305" key="18">
    <source>
    </source>
</evidence>
<evidence type="ECO:0000312" key="19">
    <source>
        <dbReference type="MGI" id="MGI:102772"/>
    </source>
</evidence>
<accession>Q9Z0E6</accession>
<accession>Q4FK03</accession>
<accession>Q8CIC6</accession>
<accession>Q921N2</accession>
<accession>Q9R1I0</accession>
<keyword id="KW-0929">Antimicrobial</keyword>
<keyword id="KW-0963">Cytoplasm</keyword>
<keyword id="KW-0968">Cytoplasmic vesicle</keyword>
<keyword id="KW-0333">Golgi apparatus</keyword>
<keyword id="KW-0342">GTP-binding</keyword>
<keyword id="KW-0378">Hydrolase</keyword>
<keyword id="KW-0391">Immunity</keyword>
<keyword id="KW-0399">Innate immunity</keyword>
<keyword id="KW-0449">Lipoprotein</keyword>
<keyword id="KW-0472">Membrane</keyword>
<keyword id="KW-0488">Methylation</keyword>
<keyword id="KW-0547">Nucleotide-binding</keyword>
<keyword id="KW-0636">Prenylation</keyword>
<keyword id="KW-1185">Reference proteome</keyword>
<reference key="1">
    <citation type="journal article" date="1998" name="J. Immunol.">
        <title>Two families of GTPases dominate the complex cellular response to IFN-gamma.</title>
        <authorList>
            <person name="Boehm U."/>
            <person name="Guethlein L."/>
            <person name="Klamp T."/>
            <person name="Ozbek K."/>
            <person name="Schaub A."/>
            <person name="Fuetterer A."/>
            <person name="Pfeffer K."/>
            <person name="Howard J.C."/>
        </authorList>
    </citation>
    <scope>NUCLEOTIDE SEQUENCE [MRNA]</scope>
    <scope>INDUCTION</scope>
    <source>
        <strain>C57BL/6J</strain>
    </source>
</reference>
<reference key="2">
    <citation type="journal article" date="1998" name="J. Interferon Cytokine Res.">
        <title>Murine GBP-2: a new IFN-gamma-induced member of the GBP family of GTPases isolated from macrophages.</title>
        <authorList>
            <person name="Vestal D.J."/>
            <person name="Buss J.E."/>
            <person name="McKercher S.R."/>
            <person name="Jenkins N.A."/>
            <person name="Copeland N.G."/>
            <person name="Kelner G.S."/>
            <person name="Asundi V.K."/>
            <person name="Maki R.A."/>
        </authorList>
    </citation>
    <scope>NUCLEOTIDE SEQUENCE [MRNA]</scope>
    <scope>ISOPRENYLATION AT CYS-586</scope>
    <scope>METHYLATION AT CYS-586</scope>
    <source>
        <strain>C57BL/6J</strain>
        <tissue>Bone marrow</tissue>
    </source>
</reference>
<reference key="3">
    <citation type="journal article" date="1999" name="J. Interferon Cytokine Res.">
        <title>Genomic organization and chromosomal localization of a new member of the murine interferon-induced guanylate-binding protein family.</title>
        <authorList>
            <person name="Anderson S.L."/>
            <person name="Carton J.M."/>
            <person name="Zhang X."/>
            <person name="Rubin B.Y."/>
        </authorList>
    </citation>
    <scope>NUCLEOTIDE SEQUENCE [MRNA]</scope>
    <source>
        <strain>C57BL/6J</strain>
        <tissue>Kidney</tissue>
    </source>
</reference>
<reference key="4">
    <citation type="submission" date="2005-07" db="EMBL/GenBank/DDBJ databases">
        <title>Cloning of mouse full open reading frames in Gateway(R) system entry vector (pDONR201).</title>
        <authorList>
            <person name="Ebert L."/>
            <person name="Muenstermann E."/>
            <person name="Schatten R."/>
            <person name="Henze S."/>
            <person name="Bohn E."/>
            <person name="Mollenhauer J."/>
            <person name="Wiemann S."/>
            <person name="Schick M."/>
            <person name="Korn B."/>
        </authorList>
    </citation>
    <scope>NUCLEOTIDE SEQUENCE [LARGE SCALE MRNA]</scope>
</reference>
<reference key="5">
    <citation type="journal article" date="2004" name="Genome Res.">
        <title>The status, quality, and expansion of the NIH full-length cDNA project: the Mammalian Gene Collection (MGC).</title>
        <authorList>
            <consortium name="The MGC Project Team"/>
        </authorList>
    </citation>
    <scope>NUCLEOTIDE SEQUENCE [LARGE SCALE MRNA]</scope>
    <source>
        <strain>C57BL/6J</strain>
        <tissue>Mammary gland</tissue>
    </source>
</reference>
<reference key="6">
    <citation type="journal article" date="2007" name="J. Immunol.">
        <title>Extensive characterization of IFN-induced GTPases mGBP1 to mGBP10 involved in host defense.</title>
        <authorList>
            <person name="Degrandi D."/>
            <person name="Konermann C."/>
            <person name="Beuter-Gunia C."/>
            <person name="Kresse A."/>
            <person name="Wurthner J."/>
            <person name="Kurig S."/>
            <person name="Beer S."/>
            <person name="Pfeffer K."/>
        </authorList>
    </citation>
    <scope>FUNCTION</scope>
    <scope>INDUCTION</scope>
    <scope>SUBCELLULAR LOCATION</scope>
</reference>
<reference key="7">
    <citation type="journal article" date="2010" name="Cell">
        <title>A tissue-specific atlas of mouse protein phosphorylation and expression.</title>
        <authorList>
            <person name="Huttlin E.L."/>
            <person name="Jedrychowski M.P."/>
            <person name="Elias J.E."/>
            <person name="Goswami T."/>
            <person name="Rad R."/>
            <person name="Beausoleil S.A."/>
            <person name="Villen J."/>
            <person name="Haas W."/>
            <person name="Sowa M.E."/>
            <person name="Gygi S.P."/>
        </authorList>
    </citation>
    <scope>IDENTIFICATION BY MASS SPECTROMETRY [LARGE SCALE ANALYSIS]</scope>
    <source>
        <tissue>Brain</tissue>
        <tissue>Brown adipose tissue</tissue>
        <tissue>Heart</tissue>
        <tissue>Kidney</tissue>
        <tissue>Liver</tissue>
        <tissue>Lung</tissue>
        <tissue>Pancreas</tissue>
        <tissue>Spleen</tissue>
    </source>
</reference>
<reference key="8">
    <citation type="journal article" date="2020" name="MBio">
        <title>Essential Role of mGBP7 for Survival of Toxoplasma gondii Infection.</title>
        <authorList>
            <person name="Steffens N."/>
            <person name="Beuter-Gunia C."/>
            <person name="Kravets E."/>
            <person name="Reich A."/>
            <person name="Legewie L."/>
            <person name="Pfeffer K."/>
            <person name="Degrandi D."/>
        </authorList>
    </citation>
    <scope>SUBCELLULAR LOCATION</scope>
</reference>
<reference key="9">
    <citation type="journal article" date="2014" name="Nature">
        <title>Caspase-11 activation requires lysis of pathogen-containing vacuoles by IFN-induced GTPases.</title>
        <authorList>
            <person name="Meunier E."/>
            <person name="Dick M.S."/>
            <person name="Dreier R.F."/>
            <person name="Schuermann N."/>
            <person name="Kenzelmann Broz D."/>
            <person name="Warming S."/>
            <person name="Roose-Girma M."/>
            <person name="Bumann D."/>
            <person name="Kayagaki N."/>
            <person name="Takeda K."/>
            <person name="Yamamoto M."/>
            <person name="Broz P."/>
        </authorList>
    </citation>
    <scope>FUNCTION</scope>
</reference>
<reference key="10">
    <citation type="journal article" date="2014" name="Proc. Natl. Acad. Sci. U.S.A.">
        <title>Guanylate binding proteins promote caspase-11-dependent pyroptosis in response to cytoplasmic LPS.</title>
        <authorList>
            <person name="Pilla D.M."/>
            <person name="Hagar J.A."/>
            <person name="Haldar A.K."/>
            <person name="Mason A.K."/>
            <person name="Degrandi D."/>
            <person name="Pfeffer K."/>
            <person name="Ernst R.K."/>
            <person name="Yamamoto M."/>
            <person name="Miao E.A."/>
            <person name="Coers J."/>
        </authorList>
    </citation>
    <scope>FUNCTION</scope>
</reference>
<reference key="11">
    <citation type="journal article" date="2015" name="Nat. Immunol.">
        <title>The transcription factor IRF1 and guanylate-binding proteins target activation of the AIM2 inflammasome by Francisella infection.</title>
        <authorList>
            <person name="Man S.M."/>
            <person name="Karki R."/>
            <person name="Malireddi R.K."/>
            <person name="Neale G."/>
            <person name="Vogel P."/>
            <person name="Yamamoto M."/>
            <person name="Lamkanfi M."/>
            <person name="Kanneganti T.D."/>
        </authorList>
    </citation>
    <scope>FUNCTION</scope>
    <scope>INDUCTION</scope>
</reference>
<reference key="12">
    <citation type="journal article" date="2015" name="Nat. Immunol.">
        <title>Guanylate-binding proteins promote activation of the AIM2 inflammasome during infection with Francisella novicida.</title>
        <authorList>
            <person name="Meunier E."/>
            <person name="Wallet P."/>
            <person name="Dreier R.F."/>
            <person name="Costanzo S."/>
            <person name="Anton L."/>
            <person name="Ruehl S."/>
            <person name="Dussurgey S."/>
            <person name="Dick M.S."/>
            <person name="Kistner A."/>
            <person name="Rigard M."/>
            <person name="Degrandi D."/>
            <person name="Pfeffer K."/>
            <person name="Yamamoto M."/>
            <person name="Henry T."/>
            <person name="Broz P."/>
        </authorList>
    </citation>
    <scope>FUNCTION</scope>
</reference>
<reference key="13">
    <citation type="journal article" date="2016" name="Cell">
        <title>IRGB10 liberates bacterial ligands for sensing by the AIM2 and caspase-11-NLRP3 inflammasomes.</title>
        <authorList>
            <person name="Man S.M."/>
            <person name="Karki R."/>
            <person name="Sasai M."/>
            <person name="Place D.E."/>
            <person name="Kesavardhana S."/>
            <person name="Temirov J."/>
            <person name="Frase S."/>
            <person name="Zhu Q."/>
            <person name="Malireddi R.K.S."/>
            <person name="Kuriakose T."/>
            <person name="Peters J.L."/>
            <person name="Neale G."/>
            <person name="Brown S.A."/>
            <person name="Yamamoto M."/>
            <person name="Kanneganti T.D."/>
        </authorList>
    </citation>
    <scope>FUNCTION</scope>
</reference>
<reference key="14">
    <citation type="journal article" date="2018" name="Cell. Death. Discov.">
        <title>Guanylate binding proteins facilitate caspase-11-dependent pyroptosis in response to type 3 secretion system-negative Pseudomonas aeruginosa.</title>
        <authorList>
            <person name="Balakrishnan A."/>
            <person name="Karki R."/>
            <person name="Berwin B."/>
            <person name="Yamamoto M."/>
            <person name="Kanneganti T.D."/>
        </authorList>
    </citation>
    <scope>FUNCTION</scope>
</reference>
<dbReference type="EC" id="3.6.5.-" evidence="2"/>
<dbReference type="EMBL" id="AJ007970">
    <property type="protein sequence ID" value="CAA07797.1"/>
    <property type="molecule type" value="mRNA"/>
</dbReference>
<dbReference type="EMBL" id="AF077007">
    <property type="protein sequence ID" value="AAC98287.1"/>
    <property type="molecule type" value="mRNA"/>
</dbReference>
<dbReference type="EMBL" id="AF109168">
    <property type="protein sequence ID" value="AAD39746.1"/>
    <property type="molecule type" value="mRNA"/>
</dbReference>
<dbReference type="EMBL" id="CT010249">
    <property type="protein sequence ID" value="CAJ18457.1"/>
    <property type="molecule type" value="mRNA"/>
</dbReference>
<dbReference type="EMBL" id="BC011336">
    <property type="protein sequence ID" value="AAH11336.1"/>
    <property type="molecule type" value="mRNA"/>
</dbReference>
<dbReference type="EMBL" id="BC032882">
    <property type="protein sequence ID" value="AAH32882.1"/>
    <property type="molecule type" value="mRNA"/>
</dbReference>
<dbReference type="CCDS" id="CCDS17880.1"/>
<dbReference type="RefSeq" id="NP_034390.1">
    <property type="nucleotide sequence ID" value="NM_010260.1"/>
</dbReference>
<dbReference type="SMR" id="Q9Z0E6"/>
<dbReference type="BioGRID" id="199847">
    <property type="interactions" value="18"/>
</dbReference>
<dbReference type="FunCoup" id="Q9Z0E6">
    <property type="interactions" value="211"/>
</dbReference>
<dbReference type="IntAct" id="Q9Z0E6">
    <property type="interactions" value="2"/>
</dbReference>
<dbReference type="STRING" id="10090.ENSMUSP00000132435"/>
<dbReference type="GlyGen" id="Q9Z0E6">
    <property type="glycosylation" value="1 site, 1 O-linked glycan (1 site)"/>
</dbReference>
<dbReference type="iPTMnet" id="Q9Z0E6"/>
<dbReference type="PhosphoSitePlus" id="Q9Z0E6"/>
<dbReference type="SwissPalm" id="Q9Z0E6"/>
<dbReference type="jPOST" id="Q9Z0E6"/>
<dbReference type="PaxDb" id="10090-ENSMUSP00000132435"/>
<dbReference type="PeptideAtlas" id="Q9Z0E6"/>
<dbReference type="ProteomicsDB" id="272939"/>
<dbReference type="Pumba" id="Q9Z0E6"/>
<dbReference type="DNASU" id="14469"/>
<dbReference type="Ensembl" id="ENSMUST00000165774.8">
    <property type="protein sequence ID" value="ENSMUSP00000132435.2"/>
    <property type="gene ID" value="ENSMUSG00000028270.13"/>
</dbReference>
<dbReference type="GeneID" id="14469"/>
<dbReference type="KEGG" id="mmu:14469"/>
<dbReference type="UCSC" id="uc008roy.1">
    <property type="organism name" value="mouse"/>
</dbReference>
<dbReference type="AGR" id="MGI:102772"/>
<dbReference type="CTD" id="2634"/>
<dbReference type="MGI" id="MGI:102772">
    <property type="gene designation" value="Gbp2"/>
</dbReference>
<dbReference type="VEuPathDB" id="HostDB:ENSMUSG00000028270"/>
<dbReference type="eggNOG" id="KOG2037">
    <property type="taxonomic scope" value="Eukaryota"/>
</dbReference>
<dbReference type="GeneTree" id="ENSGT00940000162297"/>
<dbReference type="HOGENOM" id="CLU_018608_2_2_1"/>
<dbReference type="InParanoid" id="Q9Z0E6"/>
<dbReference type="OMA" id="QPTCHIL"/>
<dbReference type="OrthoDB" id="2135133at2759"/>
<dbReference type="PhylomeDB" id="Q9Z0E6"/>
<dbReference type="TreeFam" id="TF331602"/>
<dbReference type="BioGRID-ORCS" id="14469">
    <property type="hits" value="4 hits in 78 CRISPR screens"/>
</dbReference>
<dbReference type="ChiTaRS" id="Gbp2">
    <property type="organism name" value="mouse"/>
</dbReference>
<dbReference type="PRO" id="PR:Q9Z0E6"/>
<dbReference type="Proteomes" id="UP000000589">
    <property type="component" value="Chromosome 3"/>
</dbReference>
<dbReference type="RNAct" id="Q9Z0E6">
    <property type="molecule type" value="protein"/>
</dbReference>
<dbReference type="Bgee" id="ENSMUSG00000028270">
    <property type="expression patterns" value="Expressed in subcutaneous adipose tissue and 182 other cell types or tissues"/>
</dbReference>
<dbReference type="ExpressionAtlas" id="Q9Z0E6">
    <property type="expression patterns" value="baseline and differential"/>
</dbReference>
<dbReference type="GO" id="GO:0031410">
    <property type="term" value="C:cytoplasmic vesicle"/>
    <property type="evidence" value="ECO:0000314"/>
    <property type="project" value="UniProtKB"/>
</dbReference>
<dbReference type="GO" id="GO:0030659">
    <property type="term" value="C:cytoplasmic vesicle membrane"/>
    <property type="evidence" value="ECO:0007669"/>
    <property type="project" value="UniProtKB-SubCell"/>
</dbReference>
<dbReference type="GO" id="GO:0005794">
    <property type="term" value="C:Golgi apparatus"/>
    <property type="evidence" value="ECO:0000250"/>
    <property type="project" value="UniProtKB"/>
</dbReference>
<dbReference type="GO" id="GO:0000139">
    <property type="term" value="C:Golgi membrane"/>
    <property type="evidence" value="ECO:0007669"/>
    <property type="project" value="UniProtKB-SubCell"/>
</dbReference>
<dbReference type="GO" id="GO:0048471">
    <property type="term" value="C:perinuclear region of cytoplasm"/>
    <property type="evidence" value="ECO:0007669"/>
    <property type="project" value="UniProtKB-SubCell"/>
</dbReference>
<dbReference type="GO" id="GO:0106139">
    <property type="term" value="C:symbiont cell surface"/>
    <property type="evidence" value="ECO:0000314"/>
    <property type="project" value="UniProt"/>
</dbReference>
<dbReference type="GO" id="GO:0020005">
    <property type="term" value="C:symbiont-containing vacuole membrane"/>
    <property type="evidence" value="ECO:0000314"/>
    <property type="project" value="MGI"/>
</dbReference>
<dbReference type="GO" id="GO:0003925">
    <property type="term" value="F:G protein activity"/>
    <property type="evidence" value="ECO:0000250"/>
    <property type="project" value="MGI"/>
</dbReference>
<dbReference type="GO" id="GO:0005525">
    <property type="term" value="F:GTP binding"/>
    <property type="evidence" value="ECO:0007669"/>
    <property type="project" value="UniProtKB-KW"/>
</dbReference>
<dbReference type="GO" id="GO:0003924">
    <property type="term" value="F:GTPase activity"/>
    <property type="evidence" value="ECO:0000250"/>
    <property type="project" value="MGI"/>
</dbReference>
<dbReference type="GO" id="GO:0030695">
    <property type="term" value="F:GTPase regulator activity"/>
    <property type="evidence" value="ECO:0000250"/>
    <property type="project" value="MGI"/>
</dbReference>
<dbReference type="GO" id="GO:0002218">
    <property type="term" value="P:activation of innate immune response"/>
    <property type="evidence" value="ECO:0000315"/>
    <property type="project" value="UniProtKB"/>
</dbReference>
<dbReference type="GO" id="GO:0044406">
    <property type="term" value="P:adhesion of symbiont to host"/>
    <property type="evidence" value="ECO:0000314"/>
    <property type="project" value="MGI"/>
</dbReference>
<dbReference type="GO" id="GO:0035458">
    <property type="term" value="P:cellular response to interferon-beta"/>
    <property type="evidence" value="ECO:0000314"/>
    <property type="project" value="UniProtKB"/>
</dbReference>
<dbReference type="GO" id="GO:0071222">
    <property type="term" value="P:cellular response to lipopolysaccharide"/>
    <property type="evidence" value="ECO:0000314"/>
    <property type="project" value="MGI"/>
</dbReference>
<dbReference type="GO" id="GO:0071346">
    <property type="term" value="P:cellular response to type II interferon"/>
    <property type="evidence" value="ECO:0000314"/>
    <property type="project" value="MGI"/>
</dbReference>
<dbReference type="GO" id="GO:0051715">
    <property type="term" value="P:cytolysis in another organism"/>
    <property type="evidence" value="ECO:0000314"/>
    <property type="project" value="UniProtKB"/>
</dbReference>
<dbReference type="GO" id="GO:0042742">
    <property type="term" value="P:defense response to bacterium"/>
    <property type="evidence" value="ECO:0000314"/>
    <property type="project" value="UniProtKB"/>
</dbReference>
<dbReference type="GO" id="GO:0050830">
    <property type="term" value="P:defense response to Gram-positive bacterium"/>
    <property type="evidence" value="ECO:0000314"/>
    <property type="project" value="MGI"/>
</dbReference>
<dbReference type="GO" id="GO:0042832">
    <property type="term" value="P:defense response to protozoan"/>
    <property type="evidence" value="ECO:0000314"/>
    <property type="project" value="MGI"/>
</dbReference>
<dbReference type="GO" id="GO:0051607">
    <property type="term" value="P:defense response to virus"/>
    <property type="evidence" value="ECO:0000250"/>
    <property type="project" value="UniProtKB"/>
</dbReference>
<dbReference type="GO" id="GO:0140973">
    <property type="term" value="P:positive regulation of AIM2 inflammasome complex assembly"/>
    <property type="evidence" value="ECO:0000314"/>
    <property type="project" value="UniProtKB"/>
</dbReference>
<dbReference type="GO" id="GO:0140639">
    <property type="term" value="P:positive regulation of pyroptotic inflammatory response"/>
    <property type="evidence" value="ECO:0000314"/>
    <property type="project" value="UniProtKB"/>
</dbReference>
<dbReference type="GO" id="GO:0006605">
    <property type="term" value="P:protein targeting"/>
    <property type="evidence" value="ECO:0000314"/>
    <property type="project" value="UniProtKB"/>
</dbReference>
<dbReference type="GO" id="GO:0009617">
    <property type="term" value="P:response to bacterium"/>
    <property type="evidence" value="ECO:0000270"/>
    <property type="project" value="MGI"/>
</dbReference>
<dbReference type="CDD" id="cd01851">
    <property type="entry name" value="GBP"/>
    <property type="match status" value="1"/>
</dbReference>
<dbReference type="CDD" id="cd16269">
    <property type="entry name" value="GBP_C"/>
    <property type="match status" value="1"/>
</dbReference>
<dbReference type="FunFam" id="1.20.1000.10:FF:000001">
    <property type="entry name" value="Guanylate binding protein 1"/>
    <property type="match status" value="1"/>
</dbReference>
<dbReference type="FunFam" id="3.40.50.300:FF:000422">
    <property type="entry name" value="Guanylate-binding protein 1"/>
    <property type="match status" value="1"/>
</dbReference>
<dbReference type="Gene3D" id="1.20.1000.10">
    <property type="entry name" value="Guanylate-binding protein, C-terminal domain"/>
    <property type="match status" value="1"/>
</dbReference>
<dbReference type="Gene3D" id="3.40.50.300">
    <property type="entry name" value="P-loop containing nucleotide triphosphate hydrolases"/>
    <property type="match status" value="1"/>
</dbReference>
<dbReference type="InterPro" id="IPR030386">
    <property type="entry name" value="G_GB1_RHD3_dom"/>
</dbReference>
<dbReference type="InterPro" id="IPR037684">
    <property type="entry name" value="GBP_C"/>
</dbReference>
<dbReference type="InterPro" id="IPR003191">
    <property type="entry name" value="Guanylate-bd/ATL_C"/>
</dbReference>
<dbReference type="InterPro" id="IPR036543">
    <property type="entry name" value="Guanylate-bd_C_sf"/>
</dbReference>
<dbReference type="InterPro" id="IPR015894">
    <property type="entry name" value="Guanylate-bd_N"/>
</dbReference>
<dbReference type="InterPro" id="IPR027417">
    <property type="entry name" value="P-loop_NTPase"/>
</dbReference>
<dbReference type="PANTHER" id="PTHR10751">
    <property type="entry name" value="GUANYLATE BINDING PROTEIN"/>
    <property type="match status" value="1"/>
</dbReference>
<dbReference type="Pfam" id="PF02263">
    <property type="entry name" value="GBP"/>
    <property type="match status" value="1"/>
</dbReference>
<dbReference type="Pfam" id="PF02841">
    <property type="entry name" value="GBP_C"/>
    <property type="match status" value="1"/>
</dbReference>
<dbReference type="SUPFAM" id="SSF48340">
    <property type="entry name" value="Interferon-induced guanylate-binding protein 1 (GBP1), C-terminal domain"/>
    <property type="match status" value="1"/>
</dbReference>
<dbReference type="SUPFAM" id="SSF52540">
    <property type="entry name" value="P-loop containing nucleoside triphosphate hydrolases"/>
    <property type="match status" value="1"/>
</dbReference>
<dbReference type="PROSITE" id="PS51715">
    <property type="entry name" value="G_GB1_RHD3"/>
    <property type="match status" value="1"/>
</dbReference>